<evidence type="ECO:0000255" key="1">
    <source>
        <dbReference type="HAMAP-Rule" id="MF_00044"/>
    </source>
</evidence>
<name>SYD_OCEIH</name>
<accession>Q8EPS0</accession>
<comment type="function">
    <text evidence="1">Catalyzes the attachment of L-aspartate to tRNA(Asp) in a two-step reaction: L-aspartate is first activated by ATP to form Asp-AMP and then transferred to the acceptor end of tRNA(Asp).</text>
</comment>
<comment type="catalytic activity">
    <reaction evidence="1">
        <text>tRNA(Asp) + L-aspartate + ATP = L-aspartyl-tRNA(Asp) + AMP + diphosphate</text>
        <dbReference type="Rhea" id="RHEA:19649"/>
        <dbReference type="Rhea" id="RHEA-COMP:9660"/>
        <dbReference type="Rhea" id="RHEA-COMP:9678"/>
        <dbReference type="ChEBI" id="CHEBI:29991"/>
        <dbReference type="ChEBI" id="CHEBI:30616"/>
        <dbReference type="ChEBI" id="CHEBI:33019"/>
        <dbReference type="ChEBI" id="CHEBI:78442"/>
        <dbReference type="ChEBI" id="CHEBI:78516"/>
        <dbReference type="ChEBI" id="CHEBI:456215"/>
        <dbReference type="EC" id="6.1.1.12"/>
    </reaction>
</comment>
<comment type="subunit">
    <text evidence="1">Homodimer.</text>
</comment>
<comment type="subcellular location">
    <subcellularLocation>
        <location evidence="1">Cytoplasm</location>
    </subcellularLocation>
</comment>
<comment type="similarity">
    <text evidence="1">Belongs to the class-II aminoacyl-tRNA synthetase family. Type 1 subfamily.</text>
</comment>
<protein>
    <recommendedName>
        <fullName evidence="1">Aspartate--tRNA ligase</fullName>
        <ecNumber evidence="1">6.1.1.12</ecNumber>
    </recommendedName>
    <alternativeName>
        <fullName evidence="1">Aspartyl-tRNA synthetase</fullName>
        <shortName evidence="1">AspRS</shortName>
    </alternativeName>
</protein>
<dbReference type="EC" id="6.1.1.12" evidence="1"/>
<dbReference type="EMBL" id="BA000028">
    <property type="protein sequence ID" value="BAC13975.1"/>
    <property type="molecule type" value="Genomic_DNA"/>
</dbReference>
<dbReference type="RefSeq" id="WP_011066415.1">
    <property type="nucleotide sequence ID" value="NC_004193.1"/>
</dbReference>
<dbReference type="SMR" id="Q8EPS0"/>
<dbReference type="STRING" id="221109.gene:10734265"/>
<dbReference type="KEGG" id="oih:OB2019"/>
<dbReference type="eggNOG" id="COG0173">
    <property type="taxonomic scope" value="Bacteria"/>
</dbReference>
<dbReference type="HOGENOM" id="CLU_014330_3_2_9"/>
<dbReference type="OrthoDB" id="9802326at2"/>
<dbReference type="PhylomeDB" id="Q8EPS0"/>
<dbReference type="Proteomes" id="UP000000822">
    <property type="component" value="Chromosome"/>
</dbReference>
<dbReference type="GO" id="GO:0005737">
    <property type="term" value="C:cytoplasm"/>
    <property type="evidence" value="ECO:0007669"/>
    <property type="project" value="UniProtKB-SubCell"/>
</dbReference>
<dbReference type="GO" id="GO:0004815">
    <property type="term" value="F:aspartate-tRNA ligase activity"/>
    <property type="evidence" value="ECO:0007669"/>
    <property type="project" value="UniProtKB-UniRule"/>
</dbReference>
<dbReference type="GO" id="GO:0005524">
    <property type="term" value="F:ATP binding"/>
    <property type="evidence" value="ECO:0007669"/>
    <property type="project" value="UniProtKB-UniRule"/>
</dbReference>
<dbReference type="GO" id="GO:0140096">
    <property type="term" value="F:catalytic activity, acting on a protein"/>
    <property type="evidence" value="ECO:0007669"/>
    <property type="project" value="UniProtKB-ARBA"/>
</dbReference>
<dbReference type="GO" id="GO:0003676">
    <property type="term" value="F:nucleic acid binding"/>
    <property type="evidence" value="ECO:0007669"/>
    <property type="project" value="InterPro"/>
</dbReference>
<dbReference type="GO" id="GO:0016740">
    <property type="term" value="F:transferase activity"/>
    <property type="evidence" value="ECO:0007669"/>
    <property type="project" value="UniProtKB-ARBA"/>
</dbReference>
<dbReference type="GO" id="GO:0006422">
    <property type="term" value="P:aspartyl-tRNA aminoacylation"/>
    <property type="evidence" value="ECO:0007669"/>
    <property type="project" value="UniProtKB-UniRule"/>
</dbReference>
<dbReference type="CDD" id="cd00777">
    <property type="entry name" value="AspRS_core"/>
    <property type="match status" value="1"/>
</dbReference>
<dbReference type="CDD" id="cd04317">
    <property type="entry name" value="EcAspRS_like_N"/>
    <property type="match status" value="1"/>
</dbReference>
<dbReference type="Gene3D" id="3.30.930.10">
    <property type="entry name" value="Bira Bifunctional Protein, Domain 2"/>
    <property type="match status" value="1"/>
</dbReference>
<dbReference type="Gene3D" id="3.30.1360.30">
    <property type="entry name" value="GAD-like domain"/>
    <property type="match status" value="1"/>
</dbReference>
<dbReference type="Gene3D" id="2.40.50.140">
    <property type="entry name" value="Nucleic acid-binding proteins"/>
    <property type="match status" value="1"/>
</dbReference>
<dbReference type="HAMAP" id="MF_00044">
    <property type="entry name" value="Asp_tRNA_synth_type1"/>
    <property type="match status" value="1"/>
</dbReference>
<dbReference type="InterPro" id="IPR004364">
    <property type="entry name" value="Aa-tRNA-synt_II"/>
</dbReference>
<dbReference type="InterPro" id="IPR006195">
    <property type="entry name" value="aa-tRNA-synth_II"/>
</dbReference>
<dbReference type="InterPro" id="IPR045864">
    <property type="entry name" value="aa-tRNA-synth_II/BPL/LPL"/>
</dbReference>
<dbReference type="InterPro" id="IPR004524">
    <property type="entry name" value="Asp-tRNA-ligase_1"/>
</dbReference>
<dbReference type="InterPro" id="IPR047089">
    <property type="entry name" value="Asp-tRNA-ligase_1_N"/>
</dbReference>
<dbReference type="InterPro" id="IPR002312">
    <property type="entry name" value="Asp/Asn-tRNA-synth_IIb"/>
</dbReference>
<dbReference type="InterPro" id="IPR047090">
    <property type="entry name" value="AspRS_core"/>
</dbReference>
<dbReference type="InterPro" id="IPR004115">
    <property type="entry name" value="GAD-like_sf"/>
</dbReference>
<dbReference type="InterPro" id="IPR029351">
    <property type="entry name" value="GAD_dom"/>
</dbReference>
<dbReference type="InterPro" id="IPR012340">
    <property type="entry name" value="NA-bd_OB-fold"/>
</dbReference>
<dbReference type="InterPro" id="IPR004365">
    <property type="entry name" value="NA-bd_OB_tRNA"/>
</dbReference>
<dbReference type="NCBIfam" id="TIGR00459">
    <property type="entry name" value="aspS_bact"/>
    <property type="match status" value="1"/>
</dbReference>
<dbReference type="NCBIfam" id="NF001750">
    <property type="entry name" value="PRK00476.1"/>
    <property type="match status" value="1"/>
</dbReference>
<dbReference type="PANTHER" id="PTHR22594:SF5">
    <property type="entry name" value="ASPARTATE--TRNA LIGASE, MITOCHONDRIAL"/>
    <property type="match status" value="1"/>
</dbReference>
<dbReference type="PANTHER" id="PTHR22594">
    <property type="entry name" value="ASPARTYL/LYSYL-TRNA SYNTHETASE"/>
    <property type="match status" value="1"/>
</dbReference>
<dbReference type="Pfam" id="PF02938">
    <property type="entry name" value="GAD"/>
    <property type="match status" value="1"/>
</dbReference>
<dbReference type="Pfam" id="PF00152">
    <property type="entry name" value="tRNA-synt_2"/>
    <property type="match status" value="1"/>
</dbReference>
<dbReference type="Pfam" id="PF01336">
    <property type="entry name" value="tRNA_anti-codon"/>
    <property type="match status" value="1"/>
</dbReference>
<dbReference type="PRINTS" id="PR01042">
    <property type="entry name" value="TRNASYNTHASP"/>
</dbReference>
<dbReference type="SUPFAM" id="SSF55681">
    <property type="entry name" value="Class II aaRS and biotin synthetases"/>
    <property type="match status" value="1"/>
</dbReference>
<dbReference type="SUPFAM" id="SSF55261">
    <property type="entry name" value="GAD domain-like"/>
    <property type="match status" value="1"/>
</dbReference>
<dbReference type="SUPFAM" id="SSF50249">
    <property type="entry name" value="Nucleic acid-binding proteins"/>
    <property type="match status" value="1"/>
</dbReference>
<dbReference type="PROSITE" id="PS50862">
    <property type="entry name" value="AA_TRNA_LIGASE_II"/>
    <property type="match status" value="1"/>
</dbReference>
<organism>
    <name type="scientific">Oceanobacillus iheyensis (strain DSM 14371 / CIP 107618 / JCM 11309 / KCTC 3954 / HTE831)</name>
    <dbReference type="NCBI Taxonomy" id="221109"/>
    <lineage>
        <taxon>Bacteria</taxon>
        <taxon>Bacillati</taxon>
        <taxon>Bacillota</taxon>
        <taxon>Bacilli</taxon>
        <taxon>Bacillales</taxon>
        <taxon>Bacillaceae</taxon>
        <taxon>Oceanobacillus</taxon>
    </lineage>
</organism>
<keyword id="KW-0030">Aminoacyl-tRNA synthetase</keyword>
<keyword id="KW-0067">ATP-binding</keyword>
<keyword id="KW-0963">Cytoplasm</keyword>
<keyword id="KW-0436">Ligase</keyword>
<keyword id="KW-0547">Nucleotide-binding</keyword>
<keyword id="KW-0648">Protein biosynthesis</keyword>
<keyword id="KW-1185">Reference proteome</keyword>
<sequence>MSERLMAGRLNEKNIGEKVLLKGWVQKRRDLGGLIFIDLRDKSGLIQVVFNPDHSKKALETAENIRSEYVIEINGTVVARDEATINPSMKTGKIEVNASSVQILNKAKTPPFTIQDETDVSEDVRLKYRYLDLRRNSLQETFRLRHQTTQSIRNYLNDKDFLEMETPILTKSTPEGARDYLVPSRVHPGEFYALPQSPQLFKQLIMMGGFERYYQIARCFRDEDLRADRQPEFTQIDIETSFLTSDEIMDMTEHMMKKVMKEVKDIDISLPLPRMPYQEAMDRYGSDKPDTRFDLELIHVSDIVASSGFKVFSQAVDNGGKVALLNIKGKADNYSRKDIDKLTEYVKVYDAKGLAWLKADESELKGPIAKFLSEEEVAGIRDRANVEQGDLLLFVADKTNVVYDSLGALRLYLGKELGLIDESKFHFLWVTDWPLLEYDEGLGRYFAAHHPFTSAIEEDLDKLETDPASVRANAYDLVLNGFELGGGSIRIHQKEQQDQMFKVLGFSEEEARSQFGFLLDALEYGAPPHGGIALGLDRIIMLLAGRSNLRDTILFPKTASASDLMTAAPSGVSDDQLQELSIQLQSGEKNQ</sequence>
<reference key="1">
    <citation type="journal article" date="2002" name="Nucleic Acids Res.">
        <title>Genome sequence of Oceanobacillus iheyensis isolated from the Iheya Ridge and its unexpected adaptive capabilities to extreme environments.</title>
        <authorList>
            <person name="Takami H."/>
            <person name="Takaki Y."/>
            <person name="Uchiyama I."/>
        </authorList>
    </citation>
    <scope>NUCLEOTIDE SEQUENCE [LARGE SCALE GENOMIC DNA]</scope>
    <source>
        <strain>DSM 14371 / CIP 107618 / JCM 11309 / KCTC 3954 / HTE831</strain>
    </source>
</reference>
<feature type="chain" id="PRO_0000110913" description="Aspartate--tRNA ligase">
    <location>
        <begin position="1"/>
        <end position="591"/>
    </location>
</feature>
<feature type="region of interest" description="Aspartate" evidence="1">
    <location>
        <begin position="199"/>
        <end position="202"/>
    </location>
</feature>
<feature type="binding site" evidence="1">
    <location>
        <position position="175"/>
    </location>
    <ligand>
        <name>L-aspartate</name>
        <dbReference type="ChEBI" id="CHEBI:29991"/>
    </ligand>
</feature>
<feature type="binding site" evidence="1">
    <location>
        <begin position="221"/>
        <end position="223"/>
    </location>
    <ligand>
        <name>ATP</name>
        <dbReference type="ChEBI" id="CHEBI:30616"/>
    </ligand>
</feature>
<feature type="binding site" evidence="1">
    <location>
        <position position="221"/>
    </location>
    <ligand>
        <name>L-aspartate</name>
        <dbReference type="ChEBI" id="CHEBI:29991"/>
    </ligand>
</feature>
<feature type="binding site" evidence="1">
    <location>
        <position position="230"/>
    </location>
    <ligand>
        <name>ATP</name>
        <dbReference type="ChEBI" id="CHEBI:30616"/>
    </ligand>
</feature>
<feature type="binding site" evidence="1">
    <location>
        <position position="449"/>
    </location>
    <ligand>
        <name>L-aspartate</name>
        <dbReference type="ChEBI" id="CHEBI:29991"/>
    </ligand>
</feature>
<feature type="binding site" evidence="1">
    <location>
        <position position="483"/>
    </location>
    <ligand>
        <name>ATP</name>
        <dbReference type="ChEBI" id="CHEBI:30616"/>
    </ligand>
</feature>
<feature type="binding site" evidence="1">
    <location>
        <position position="490"/>
    </location>
    <ligand>
        <name>L-aspartate</name>
        <dbReference type="ChEBI" id="CHEBI:29991"/>
    </ligand>
</feature>
<feature type="binding site" evidence="1">
    <location>
        <begin position="535"/>
        <end position="538"/>
    </location>
    <ligand>
        <name>ATP</name>
        <dbReference type="ChEBI" id="CHEBI:30616"/>
    </ligand>
</feature>
<proteinExistence type="inferred from homology"/>
<gene>
    <name evidence="1" type="primary">aspS</name>
    <name type="ordered locus">OB2019</name>
</gene>